<reference key="1">
    <citation type="journal article" date="2003" name="Nat. Genet.">
        <title>Comparative analysis of the genome sequences of Bordetella pertussis, Bordetella parapertussis and Bordetella bronchiseptica.</title>
        <authorList>
            <person name="Parkhill J."/>
            <person name="Sebaihia M."/>
            <person name="Preston A."/>
            <person name="Murphy L.D."/>
            <person name="Thomson N.R."/>
            <person name="Harris D.E."/>
            <person name="Holden M.T.G."/>
            <person name="Churcher C.M."/>
            <person name="Bentley S.D."/>
            <person name="Mungall K.L."/>
            <person name="Cerdeno-Tarraga A.-M."/>
            <person name="Temple L."/>
            <person name="James K.D."/>
            <person name="Harris B."/>
            <person name="Quail M.A."/>
            <person name="Achtman M."/>
            <person name="Atkin R."/>
            <person name="Baker S."/>
            <person name="Basham D."/>
            <person name="Bason N."/>
            <person name="Cherevach I."/>
            <person name="Chillingworth T."/>
            <person name="Collins M."/>
            <person name="Cronin A."/>
            <person name="Davis P."/>
            <person name="Doggett J."/>
            <person name="Feltwell T."/>
            <person name="Goble A."/>
            <person name="Hamlin N."/>
            <person name="Hauser H."/>
            <person name="Holroyd S."/>
            <person name="Jagels K."/>
            <person name="Leather S."/>
            <person name="Moule S."/>
            <person name="Norberczak H."/>
            <person name="O'Neil S."/>
            <person name="Ormond D."/>
            <person name="Price C."/>
            <person name="Rabbinowitsch E."/>
            <person name="Rutter S."/>
            <person name="Sanders M."/>
            <person name="Saunders D."/>
            <person name="Seeger K."/>
            <person name="Sharp S."/>
            <person name="Simmonds M."/>
            <person name="Skelton J."/>
            <person name="Squares R."/>
            <person name="Squares S."/>
            <person name="Stevens K."/>
            <person name="Unwin L."/>
            <person name="Whitehead S."/>
            <person name="Barrell B.G."/>
            <person name="Maskell D.J."/>
        </authorList>
    </citation>
    <scope>NUCLEOTIDE SEQUENCE [LARGE SCALE GENOMIC DNA]</scope>
    <source>
        <strain>ATCC BAA-588 / NCTC 13252 / RB50</strain>
    </source>
</reference>
<organism>
    <name type="scientific">Bordetella bronchiseptica (strain ATCC BAA-588 / NCTC 13252 / RB50)</name>
    <name type="common">Alcaligenes bronchisepticus</name>
    <dbReference type="NCBI Taxonomy" id="257310"/>
    <lineage>
        <taxon>Bacteria</taxon>
        <taxon>Pseudomonadati</taxon>
        <taxon>Pseudomonadota</taxon>
        <taxon>Betaproteobacteria</taxon>
        <taxon>Burkholderiales</taxon>
        <taxon>Alcaligenaceae</taxon>
        <taxon>Bordetella</taxon>
    </lineage>
</organism>
<protein>
    <recommendedName>
        <fullName evidence="1">Aquaporin Z</fullName>
    </recommendedName>
</protein>
<proteinExistence type="inferred from homology"/>
<accession>Q7WKG2</accession>
<keyword id="KW-0997">Cell inner membrane</keyword>
<keyword id="KW-1003">Cell membrane</keyword>
<keyword id="KW-0472">Membrane</keyword>
<keyword id="KW-0677">Repeat</keyword>
<keyword id="KW-0812">Transmembrane</keyword>
<keyword id="KW-1133">Transmembrane helix</keyword>
<keyword id="KW-0813">Transport</keyword>
<evidence type="ECO:0000255" key="1">
    <source>
        <dbReference type="HAMAP-Rule" id="MF_01146"/>
    </source>
</evidence>
<gene>
    <name evidence="1" type="primary">aqpZ</name>
    <name type="ordered locus">BB2145</name>
</gene>
<dbReference type="EMBL" id="BX640443">
    <property type="protein sequence ID" value="CAE32641.1"/>
    <property type="molecule type" value="Genomic_DNA"/>
</dbReference>
<dbReference type="RefSeq" id="WP_003812617.1">
    <property type="nucleotide sequence ID" value="NC_002927.3"/>
</dbReference>
<dbReference type="SMR" id="Q7WKG2"/>
<dbReference type="GeneID" id="93203730"/>
<dbReference type="KEGG" id="bbr:BB2145"/>
<dbReference type="eggNOG" id="COG0580">
    <property type="taxonomic scope" value="Bacteria"/>
</dbReference>
<dbReference type="HOGENOM" id="CLU_020019_3_2_4"/>
<dbReference type="Proteomes" id="UP000001027">
    <property type="component" value="Chromosome"/>
</dbReference>
<dbReference type="GO" id="GO:0005886">
    <property type="term" value="C:plasma membrane"/>
    <property type="evidence" value="ECO:0007669"/>
    <property type="project" value="UniProtKB-SubCell"/>
</dbReference>
<dbReference type="GO" id="GO:0015250">
    <property type="term" value="F:water channel activity"/>
    <property type="evidence" value="ECO:0007669"/>
    <property type="project" value="UniProtKB-UniRule"/>
</dbReference>
<dbReference type="CDD" id="cd00333">
    <property type="entry name" value="MIP"/>
    <property type="match status" value="1"/>
</dbReference>
<dbReference type="FunFam" id="1.20.1080.10:FF:000007">
    <property type="entry name" value="Aquaporin Z"/>
    <property type="match status" value="1"/>
</dbReference>
<dbReference type="Gene3D" id="1.20.1080.10">
    <property type="entry name" value="Glycerol uptake facilitator protein"/>
    <property type="match status" value="1"/>
</dbReference>
<dbReference type="HAMAP" id="MF_01146">
    <property type="entry name" value="Aquaporin_Z"/>
    <property type="match status" value="1"/>
</dbReference>
<dbReference type="InterPro" id="IPR023271">
    <property type="entry name" value="Aquaporin-like"/>
</dbReference>
<dbReference type="InterPro" id="IPR034294">
    <property type="entry name" value="Aquaporin_transptr"/>
</dbReference>
<dbReference type="InterPro" id="IPR023743">
    <property type="entry name" value="Aquaporin_Z"/>
</dbReference>
<dbReference type="InterPro" id="IPR000425">
    <property type="entry name" value="MIP"/>
</dbReference>
<dbReference type="InterPro" id="IPR022357">
    <property type="entry name" value="MIP_CS"/>
</dbReference>
<dbReference type="NCBIfam" id="TIGR00861">
    <property type="entry name" value="MIP"/>
    <property type="match status" value="1"/>
</dbReference>
<dbReference type="NCBIfam" id="NF003838">
    <property type="entry name" value="PRK05420.1"/>
    <property type="match status" value="1"/>
</dbReference>
<dbReference type="PANTHER" id="PTHR45724:SF13">
    <property type="entry name" value="AQUAPORIN NIP1-1-RELATED"/>
    <property type="match status" value="1"/>
</dbReference>
<dbReference type="PANTHER" id="PTHR45724">
    <property type="entry name" value="AQUAPORIN NIP2-1"/>
    <property type="match status" value="1"/>
</dbReference>
<dbReference type="Pfam" id="PF00230">
    <property type="entry name" value="MIP"/>
    <property type="match status" value="1"/>
</dbReference>
<dbReference type="PRINTS" id="PR00783">
    <property type="entry name" value="MINTRINSICP"/>
</dbReference>
<dbReference type="SUPFAM" id="SSF81338">
    <property type="entry name" value="Aquaporin-like"/>
    <property type="match status" value="1"/>
</dbReference>
<dbReference type="PROSITE" id="PS00221">
    <property type="entry name" value="MIP"/>
    <property type="match status" value="1"/>
</dbReference>
<name>AQPZ_BORBR</name>
<comment type="function">
    <text evidence="1">Channel that permits osmotically driven movement of water in both directions. It is involved in the osmoregulation and in the maintenance of cell turgor during volume expansion in rapidly growing cells. It mediates rapid entry or exit of water in response to abrupt changes in osmolarity.</text>
</comment>
<comment type="catalytic activity">
    <reaction evidence="1">
        <text>H2O(in) = H2O(out)</text>
        <dbReference type="Rhea" id="RHEA:29667"/>
        <dbReference type="ChEBI" id="CHEBI:15377"/>
    </reaction>
    <physiologicalReaction direction="left-to-right" evidence="1">
        <dbReference type="Rhea" id="RHEA:29668"/>
    </physiologicalReaction>
    <physiologicalReaction direction="right-to-left" evidence="1">
        <dbReference type="Rhea" id="RHEA:29669"/>
    </physiologicalReaction>
</comment>
<comment type="subunit">
    <text evidence="1">Homotetramer.</text>
</comment>
<comment type="subcellular location">
    <subcellularLocation>
        <location evidence="1">Cell inner membrane</location>
        <topology evidence="1">Multi-pass membrane protein</topology>
    </subcellularLocation>
</comment>
<comment type="domain">
    <text evidence="1">Aquaporins contain two tandem repeats each containing three membrane-spanning domains and a pore-forming loop with the signature motif Asn-Pro-Ala (NPA).</text>
</comment>
<comment type="similarity">
    <text evidence="1">Belongs to the MIP/aquaporin (TC 1.A.8) family.</text>
</comment>
<feature type="chain" id="PRO_0000063980" description="Aquaporin Z">
    <location>
        <begin position="1"/>
        <end position="236"/>
    </location>
</feature>
<feature type="transmembrane region" description="Helical" evidence="1">
    <location>
        <begin position="12"/>
        <end position="32"/>
    </location>
</feature>
<feature type="transmembrane region" description="Helical" evidence="1">
    <location>
        <begin position="37"/>
        <end position="57"/>
    </location>
</feature>
<feature type="transmembrane region" description="Helical" evidence="1">
    <location>
        <begin position="92"/>
        <end position="112"/>
    </location>
</feature>
<feature type="transmembrane region" description="Helical" evidence="1">
    <location>
        <begin position="136"/>
        <end position="156"/>
    </location>
</feature>
<feature type="transmembrane region" description="Helical" evidence="1">
    <location>
        <begin position="163"/>
        <end position="183"/>
    </location>
</feature>
<feature type="transmembrane region" description="Helical" evidence="1">
    <location>
        <begin position="197"/>
        <end position="217"/>
    </location>
</feature>
<feature type="short sequence motif" description="NPA 1" evidence="1">
    <location>
        <begin position="66"/>
        <end position="68"/>
    </location>
</feature>
<feature type="short sequence motif" description="NPA 2" evidence="1">
    <location>
        <begin position="189"/>
        <end position="191"/>
    </location>
</feature>
<feature type="site" description="Involved in tetramerization or stability of the tetramer" evidence="1">
    <location>
        <position position="23"/>
    </location>
</feature>
<feature type="site" description="Selectivity filter" evidence="1">
    <location>
        <position position="46"/>
    </location>
</feature>
<feature type="site" description="Selectivity filter" evidence="1">
    <location>
        <position position="177"/>
    </location>
</feature>
<feature type="site" description="Selectivity filter" evidence="1">
    <location>
        <position position="186"/>
    </location>
</feature>
<feature type="site" description="Selectivity filter" evidence="1">
    <location>
        <position position="192"/>
    </location>
</feature>
<sequence>MQPLFKRCGAEFFGTFWLVLGGCGSAVLAAGVPQVGIGYAGVALAFGLTVLTMAYAVGHISGGHFNPAVTVGLAASGRFGWRDVPPYIVAQVVGAIVAAATLASIAQGVAGFDLVASKFAANGYGDHSPGKYSMQAALICEIVLSAGFVFVILGATDKRAPAGFAPIPIGLALTLIHLISIPVTNTSVNPARSTGPALFVGGWALEQLWLFWLAPIAGALVGALAYRLVGTPSAQR</sequence>